<accession>Q8ISF8</accession>
<name>RFP_ENTQU</name>
<protein>
    <recommendedName>
        <fullName>Red fluorescent protein eqFP611</fullName>
    </recommendedName>
    <alternativeName>
        <fullName>GFP-like chromoprotein</fullName>
    </alternativeName>
</protein>
<reference evidence="3 4" key="1">
    <citation type="journal article" date="2002" name="Proc. Natl. Acad. Sci. U.S.A.">
        <title>A far-red fluorescent protein with fast maturation and reduced oligomerization tendency from Entacmaea quadricolor (Anthozoa, Actinaria).</title>
        <authorList>
            <person name="Wiedenmann J."/>
            <person name="Schenk A."/>
            <person name="Roecker C."/>
            <person name="Girod A."/>
            <person name="Spindler K.-D."/>
            <person name="Nienhaus G.U."/>
        </authorList>
    </citation>
    <scope>NUCLEOTIDE SEQUENCE [MRNA]</scope>
    <scope>FUNCTION</scope>
    <scope>SUBUNIT</scope>
</reference>
<reference evidence="3" key="2">
    <citation type="journal article" date="2003" name="J. Biol. Chem.">
        <title>The 2.0-A crystal structure of eqFP611, a far red fluorescent protein from the sea anemone Entacmaea quadricolor.</title>
        <authorList>
            <person name="Petersen J."/>
            <person name="Wilmann P.G."/>
            <person name="Beddoe T."/>
            <person name="Oakley A.J."/>
            <person name="Devenish R.J."/>
            <person name="Prescott M."/>
            <person name="Rossjohn J."/>
        </authorList>
    </citation>
    <scope>X-RAY CRYSTALLOGRAPHY (2.0 ANGSTROMS)</scope>
    <scope>DEHYDROGENATION AT TYR-64</scope>
</reference>
<comment type="function">
    <text evidence="1">Pigment protein.</text>
</comment>
<comment type="biophysicochemical properties">
    <absorption>
        <max>559 nm</max>
        <text>Exhibits a smaller absorbance peak at 525 nm. Has a strong fluorescence emission spectrum which peaks at 611 nm.</text>
    </absorption>
</comment>
<comment type="subunit">
    <text evidence="1">Monomer.</text>
</comment>
<comment type="PTM">
    <text>Contains a chromophore consisting of modified amino acid residues. The chromophore is formed by autocatalytic backbone condensation between Xaa-N and Gly-(N+2), oxidation of Tyr-(N+1) to didehydrotyrosine, and formation of a double bond to the alpha-amino nitrogen of residue Xaa-N. Maturation of the chromophore requires nothing other than molecular oxygen.</text>
</comment>
<comment type="biotechnology">
    <text evidence="3">Fluorescent proteins have become a useful and ubiquitous tool for making chimeric proteins, where they function as a fluorescent protein tag. Typically they tolerate N- and C-terminal fusion to a broad variety of proteins. They have been expressed in most known cell types and are used as a noninvasive fluorescent marker in living cells and organisms. They enable a wide range of applications where they have functioned as a cell lineage tracer, reporter of gene expression, or as a measure of protein-protein interactions.</text>
</comment>
<comment type="miscellaneous">
    <text evidence="1">The emission does not change over the pH range of 4 to 10. Maturation occurs via a green intermediate and is complete within 12 hours. Recombinant expression at high temperatures induces oligomerization.</text>
</comment>
<comment type="similarity">
    <text evidence="1">Belongs to the GFP family.</text>
</comment>
<sequence>MNSLIKENMRMMVVMEGSVNGYQFKCTGEGDGNPYMGTQTMRIKVVEGGPLPFAFDILATSFMYGSKTFIKHTKGIPDFFKQSFPEGFTWERVTRYEDGGVFTVMQDTSLEDGCLVYHAKVTGVNFPSNGAVMQKKTKGWEPNTEMLYPADGGLRGYSQMALNVDGGGYLSCSFETTYRSKKTVENFKMPGFHFVDHRLERLEESDKEMFVVQHEHAVAKFCDLPSKLGRL</sequence>
<organism>
    <name type="scientific">Entacmaea quadricolor</name>
    <name type="common">Bubble-tip anemone</name>
    <name type="synonym">Parasicyonis actinostoloides</name>
    <dbReference type="NCBI Taxonomy" id="6118"/>
    <lineage>
        <taxon>Eukaryota</taxon>
        <taxon>Metazoa</taxon>
        <taxon>Cnidaria</taxon>
        <taxon>Anthozoa</taxon>
        <taxon>Hexacorallia</taxon>
        <taxon>Actiniaria</taxon>
        <taxon>Actiniidae</taxon>
        <taxon>Entacmaea</taxon>
    </lineage>
</organism>
<proteinExistence type="evidence at protein level"/>
<dbReference type="EMBL" id="AY130757">
    <property type="protein sequence ID" value="AAN05449.1"/>
    <property type="molecule type" value="mRNA"/>
</dbReference>
<dbReference type="PDB" id="1UIS">
    <property type="method" value="X-ray"/>
    <property type="resolution" value="2.00 A"/>
    <property type="chains" value="A/B=1-231"/>
</dbReference>
<dbReference type="PDB" id="3E5T">
    <property type="method" value="X-ray"/>
    <property type="resolution" value="1.10 A"/>
    <property type="chains" value="A=1-231"/>
</dbReference>
<dbReference type="PDB" id="3E5V">
    <property type="method" value="X-ray"/>
    <property type="resolution" value="2.10 A"/>
    <property type="chains" value="A=1-231"/>
</dbReference>
<dbReference type="PDB" id="3E5W">
    <property type="method" value="X-ray"/>
    <property type="resolution" value="1.71 A"/>
    <property type="chains" value="A/B/C/D=1-231"/>
</dbReference>
<dbReference type="PDB" id="3IP2">
    <property type="method" value="X-ray"/>
    <property type="resolution" value="1.60 A"/>
    <property type="chains" value="A=34-229"/>
</dbReference>
<dbReference type="PDB" id="3U0L">
    <property type="method" value="X-ray"/>
    <property type="resolution" value="1.25 A"/>
    <property type="chains" value="A=1-224"/>
</dbReference>
<dbReference type="PDB" id="3U0M">
    <property type="method" value="X-ray"/>
    <property type="resolution" value="1.65 A"/>
    <property type="chains" value="A=1-224"/>
</dbReference>
<dbReference type="PDB" id="3U0N">
    <property type="method" value="X-ray"/>
    <property type="resolution" value="1.60 A"/>
    <property type="chains" value="A=1-224"/>
</dbReference>
<dbReference type="PDB" id="6XWY">
    <property type="method" value="X-ray"/>
    <property type="resolution" value="1.75 A"/>
    <property type="chains" value="A/B/C/D=4-222"/>
</dbReference>
<dbReference type="PDB" id="7Q6B">
    <property type="method" value="X-ray"/>
    <property type="resolution" value="1.80 A"/>
    <property type="chains" value="A=4-221"/>
</dbReference>
<dbReference type="PDB" id="7QGK">
    <property type="method" value="X-ray"/>
    <property type="resolution" value="1.50 A"/>
    <property type="chains" value="A=4-221"/>
</dbReference>
<dbReference type="PDB" id="8AAB">
    <property type="method" value="X-ray"/>
    <property type="resolution" value="1.60 A"/>
    <property type="chains" value="A=4-221"/>
</dbReference>
<dbReference type="PDB" id="8C0N">
    <property type="method" value="X-ray"/>
    <property type="resolution" value="2.90 A"/>
    <property type="chains" value="A/B/C/D=4-231"/>
</dbReference>
<dbReference type="PDBsum" id="1UIS"/>
<dbReference type="PDBsum" id="3E5T"/>
<dbReference type="PDBsum" id="3E5V"/>
<dbReference type="PDBsum" id="3E5W"/>
<dbReference type="PDBsum" id="3IP2"/>
<dbReference type="PDBsum" id="3U0L"/>
<dbReference type="PDBsum" id="3U0M"/>
<dbReference type="PDBsum" id="3U0N"/>
<dbReference type="PDBsum" id="6XWY"/>
<dbReference type="PDBsum" id="7Q6B"/>
<dbReference type="PDBsum" id="7QGK"/>
<dbReference type="PDBsum" id="8AAB"/>
<dbReference type="PDBsum" id="8C0N"/>
<dbReference type="SMR" id="Q8ISF8"/>
<dbReference type="EvolutionaryTrace" id="Q8ISF8"/>
<dbReference type="GO" id="GO:0008218">
    <property type="term" value="P:bioluminescence"/>
    <property type="evidence" value="ECO:0007669"/>
    <property type="project" value="UniProtKB-KW"/>
</dbReference>
<dbReference type="Gene3D" id="3.30.1300.40">
    <property type="match status" value="1"/>
</dbReference>
<dbReference type="Gene3D" id="2.40.155.10">
    <property type="entry name" value="Green fluorescent protein"/>
    <property type="match status" value="1"/>
</dbReference>
<dbReference type="InterPro" id="IPR009017">
    <property type="entry name" value="GFP"/>
</dbReference>
<dbReference type="InterPro" id="IPR011584">
    <property type="entry name" value="GFP-related"/>
</dbReference>
<dbReference type="Pfam" id="PF01353">
    <property type="entry name" value="GFP"/>
    <property type="match status" value="1"/>
</dbReference>
<dbReference type="SUPFAM" id="SSF54511">
    <property type="entry name" value="GFP-like"/>
    <property type="match status" value="1"/>
</dbReference>
<evidence type="ECO:0000269" key="1">
    <source>
    </source>
</evidence>
<evidence type="ECO:0000269" key="2">
    <source>
    </source>
</evidence>
<evidence type="ECO:0000305" key="3"/>
<evidence type="ECO:0000312" key="4">
    <source>
        <dbReference type="EMBL" id="AAN05449.1"/>
    </source>
</evidence>
<evidence type="ECO:0007829" key="5">
    <source>
        <dbReference type="PDB" id="1UIS"/>
    </source>
</evidence>
<evidence type="ECO:0007829" key="6">
    <source>
        <dbReference type="PDB" id="3E5T"/>
    </source>
</evidence>
<evidence type="ECO:0007829" key="7">
    <source>
        <dbReference type="PDB" id="3IP2"/>
    </source>
</evidence>
<evidence type="ECO:0007829" key="8">
    <source>
        <dbReference type="PDB" id="3U0L"/>
    </source>
</evidence>
<evidence type="ECO:0007829" key="9">
    <source>
        <dbReference type="PDB" id="6XWY"/>
    </source>
</evidence>
<evidence type="ECO:0007829" key="10">
    <source>
        <dbReference type="PDB" id="8C0N"/>
    </source>
</evidence>
<feature type="chain" id="PRO_0000192578" description="Red fluorescent protein eqFP611">
    <location>
        <begin position="1"/>
        <end position="231"/>
    </location>
</feature>
<feature type="modified residue" description="(E)-2,3-didehydrotyrosine" evidence="2">
    <location>
        <position position="64"/>
    </location>
</feature>
<feature type="cross-link" description="2-iminomethyl-5-imidazolinone (Met-Gly)" evidence="2">
    <location>
        <begin position="63"/>
        <end position="65"/>
    </location>
</feature>
<feature type="strand" evidence="5">
    <location>
        <begin position="3"/>
        <end position="5"/>
    </location>
</feature>
<feature type="strand" evidence="6">
    <location>
        <begin position="7"/>
        <end position="19"/>
    </location>
</feature>
<feature type="strand" evidence="6">
    <location>
        <begin position="22"/>
        <end position="33"/>
    </location>
</feature>
<feature type="turn" evidence="6">
    <location>
        <begin position="34"/>
        <end position="37"/>
    </location>
</feature>
<feature type="strand" evidence="6">
    <location>
        <begin position="38"/>
        <end position="48"/>
    </location>
</feature>
<feature type="helix" evidence="6">
    <location>
        <begin position="55"/>
        <end position="61"/>
    </location>
</feature>
<feature type="helix" evidence="9">
    <location>
        <begin position="67"/>
        <end position="69"/>
    </location>
</feature>
<feature type="turn" evidence="7">
    <location>
        <begin position="73"/>
        <end position="75"/>
    </location>
</feature>
<feature type="helix" evidence="6">
    <location>
        <begin position="81"/>
        <end position="83"/>
    </location>
</feature>
<feature type="turn" evidence="6">
    <location>
        <begin position="84"/>
        <end position="86"/>
    </location>
</feature>
<feature type="strand" evidence="6">
    <location>
        <begin position="88"/>
        <end position="96"/>
    </location>
</feature>
<feature type="strand" evidence="6">
    <location>
        <begin position="101"/>
        <end position="111"/>
    </location>
</feature>
<feature type="strand" evidence="6">
    <location>
        <begin position="114"/>
        <end position="124"/>
    </location>
</feature>
<feature type="turn" evidence="6">
    <location>
        <begin position="131"/>
        <end position="135"/>
    </location>
</feature>
<feature type="strand" evidence="6">
    <location>
        <begin position="137"/>
        <end position="140"/>
    </location>
</feature>
<feature type="strand" evidence="6">
    <location>
        <begin position="143"/>
        <end position="150"/>
    </location>
</feature>
<feature type="strand" evidence="6">
    <location>
        <begin position="153"/>
        <end position="164"/>
    </location>
</feature>
<feature type="turn" evidence="8">
    <location>
        <begin position="165"/>
        <end position="167"/>
    </location>
</feature>
<feature type="strand" evidence="6">
    <location>
        <begin position="169"/>
        <end position="182"/>
    </location>
</feature>
<feature type="helix" evidence="6">
    <location>
        <begin position="184"/>
        <end position="186"/>
    </location>
</feature>
<feature type="helix" evidence="10">
    <location>
        <begin position="187"/>
        <end position="189"/>
    </location>
</feature>
<feature type="strand" evidence="6">
    <location>
        <begin position="192"/>
        <end position="205"/>
    </location>
</feature>
<feature type="turn" evidence="6">
    <location>
        <begin position="206"/>
        <end position="209"/>
    </location>
</feature>
<feature type="strand" evidence="6">
    <location>
        <begin position="210"/>
        <end position="220"/>
    </location>
</feature>
<feature type="strand" evidence="6">
    <location>
        <begin position="227"/>
        <end position="229"/>
    </location>
</feature>
<keyword id="KW-0002">3D-structure</keyword>
<keyword id="KW-0157">Chromophore</keyword>
<keyword id="KW-0455">Luminescence</keyword>
<keyword id="KW-0599">Photoprotein</keyword>